<comment type="similarity">
    <text evidence="1">Belongs to the UPF0179 family.</text>
</comment>
<accession>Q0W8A0</accession>
<reference key="1">
    <citation type="journal article" date="2006" name="Science">
        <title>Genome of rice cluster I archaea -- the key methane producers in the rice rhizosphere.</title>
        <authorList>
            <person name="Erkel C."/>
            <person name="Kube M."/>
            <person name="Reinhardt R."/>
            <person name="Liesack W."/>
        </authorList>
    </citation>
    <scope>NUCLEOTIDE SEQUENCE [LARGE SCALE GENOMIC DNA]</scope>
    <source>
        <strain>DSM 22066 / NBRC 105507 / MRE50</strain>
    </source>
</reference>
<keyword id="KW-1185">Reference proteome</keyword>
<feature type="chain" id="PRO_0000378140" description="UPF0179 protein UNCMA_27840">
    <location>
        <begin position="1"/>
        <end position="148"/>
    </location>
</feature>
<name>Y2784_METAR</name>
<gene>
    <name type="ordered locus">UNCMA_27840</name>
    <name type="ORF">LRC435</name>
</gene>
<evidence type="ECO:0000255" key="1">
    <source>
        <dbReference type="HAMAP-Rule" id="MF_00498"/>
    </source>
</evidence>
<dbReference type="EMBL" id="AM114193">
    <property type="protein sequence ID" value="CAJ35393.1"/>
    <property type="molecule type" value="Genomic_DNA"/>
</dbReference>
<dbReference type="RefSeq" id="WP_012037099.1">
    <property type="nucleotide sequence ID" value="NC_009464.1"/>
</dbReference>
<dbReference type="STRING" id="351160.LRC435"/>
<dbReference type="GeneID" id="5143165"/>
<dbReference type="KEGG" id="rci:LRC435"/>
<dbReference type="eggNOG" id="arCOG04477">
    <property type="taxonomic scope" value="Archaea"/>
</dbReference>
<dbReference type="OrthoDB" id="24613at2157"/>
<dbReference type="Proteomes" id="UP000000663">
    <property type="component" value="Chromosome"/>
</dbReference>
<dbReference type="HAMAP" id="MF_00498">
    <property type="entry name" value="UPF0179"/>
    <property type="match status" value="1"/>
</dbReference>
<dbReference type="InterPro" id="IPR005369">
    <property type="entry name" value="UPF0179"/>
</dbReference>
<dbReference type="PANTHER" id="PTHR40699">
    <property type="entry name" value="UPF0179 PROTEIN MJ1627"/>
    <property type="match status" value="1"/>
</dbReference>
<dbReference type="PANTHER" id="PTHR40699:SF1">
    <property type="entry name" value="UPF0179 PROTEIN MJ1627"/>
    <property type="match status" value="1"/>
</dbReference>
<dbReference type="Pfam" id="PF03684">
    <property type="entry name" value="UPF0179"/>
    <property type="match status" value="1"/>
</dbReference>
<dbReference type="PIRSF" id="PIRSF006595">
    <property type="entry name" value="UCP006595"/>
    <property type="match status" value="1"/>
</dbReference>
<organism>
    <name type="scientific">Methanocella arvoryzae (strain DSM 22066 / NBRC 105507 / MRE50)</name>
    <dbReference type="NCBI Taxonomy" id="351160"/>
    <lineage>
        <taxon>Archaea</taxon>
        <taxon>Methanobacteriati</taxon>
        <taxon>Methanobacteriota</taxon>
        <taxon>Stenosarchaea group</taxon>
        <taxon>Methanomicrobia</taxon>
        <taxon>Methanocellales</taxon>
        <taxon>Methanocellaceae</taxon>
        <taxon>Methanocella</taxon>
    </lineage>
</organism>
<sequence>MAEPDFVITLIGSKLAVPGTEFIYRGPAGECEKCKLKNICLNLDKNKKYRIVGLRNGMELDCLVHDTGVKAVEVVACPIIAVMESRKAFNGSRMTYEAPECDESCLNFALCHPEGIATGEKYTICEVFSEEVGPCKKGLTLKKVELRP</sequence>
<proteinExistence type="inferred from homology"/>
<protein>
    <recommendedName>
        <fullName evidence="1">UPF0179 protein UNCMA_27840</fullName>
    </recommendedName>
</protein>